<organism>
    <name type="scientific">Staphylococcus aureus (strain USA300 / TCH1516)</name>
    <dbReference type="NCBI Taxonomy" id="451516"/>
    <lineage>
        <taxon>Bacteria</taxon>
        <taxon>Bacillati</taxon>
        <taxon>Bacillota</taxon>
        <taxon>Bacilli</taxon>
        <taxon>Bacillales</taxon>
        <taxon>Staphylococcaceae</taxon>
        <taxon>Staphylococcus</taxon>
    </lineage>
</organism>
<dbReference type="EMBL" id="CP000730">
    <property type="protein sequence ID" value="ABX30093.1"/>
    <property type="molecule type" value="Genomic_DNA"/>
</dbReference>
<dbReference type="RefSeq" id="WP_000241351.1">
    <property type="nucleotide sequence ID" value="NC_010079.1"/>
</dbReference>
<dbReference type="SMR" id="A8YY73"/>
<dbReference type="KEGG" id="sax:USA300HOU_2096"/>
<dbReference type="HOGENOM" id="CLU_085114_4_1_9"/>
<dbReference type="GO" id="GO:0005886">
    <property type="term" value="C:plasma membrane"/>
    <property type="evidence" value="ECO:0007669"/>
    <property type="project" value="UniProtKB-SubCell"/>
</dbReference>
<dbReference type="GO" id="GO:0045259">
    <property type="term" value="C:proton-transporting ATP synthase complex"/>
    <property type="evidence" value="ECO:0007669"/>
    <property type="project" value="UniProtKB-KW"/>
</dbReference>
<dbReference type="GO" id="GO:0046933">
    <property type="term" value="F:proton-transporting ATP synthase activity, rotational mechanism"/>
    <property type="evidence" value="ECO:0007669"/>
    <property type="project" value="UniProtKB-UniRule"/>
</dbReference>
<dbReference type="Gene3D" id="1.10.520.20">
    <property type="entry name" value="N-terminal domain of the delta subunit of the F1F0-ATP synthase"/>
    <property type="match status" value="1"/>
</dbReference>
<dbReference type="HAMAP" id="MF_01416">
    <property type="entry name" value="ATP_synth_delta_bact"/>
    <property type="match status" value="1"/>
</dbReference>
<dbReference type="InterPro" id="IPR026015">
    <property type="entry name" value="ATP_synth_OSCP/delta_N_sf"/>
</dbReference>
<dbReference type="InterPro" id="IPR020781">
    <property type="entry name" value="ATPase_OSCP/d_CS"/>
</dbReference>
<dbReference type="InterPro" id="IPR000711">
    <property type="entry name" value="ATPase_OSCP/dsu"/>
</dbReference>
<dbReference type="NCBIfam" id="TIGR01145">
    <property type="entry name" value="ATP_synt_delta"/>
    <property type="match status" value="1"/>
</dbReference>
<dbReference type="NCBIfam" id="NF004399">
    <property type="entry name" value="PRK05758.1-1"/>
    <property type="match status" value="1"/>
</dbReference>
<dbReference type="PANTHER" id="PTHR11910">
    <property type="entry name" value="ATP SYNTHASE DELTA CHAIN"/>
    <property type="match status" value="1"/>
</dbReference>
<dbReference type="Pfam" id="PF00213">
    <property type="entry name" value="OSCP"/>
    <property type="match status" value="1"/>
</dbReference>
<dbReference type="PRINTS" id="PR00125">
    <property type="entry name" value="ATPASEDELTA"/>
</dbReference>
<dbReference type="SUPFAM" id="SSF47928">
    <property type="entry name" value="N-terminal domain of the delta subunit of the F1F0-ATP synthase"/>
    <property type="match status" value="1"/>
</dbReference>
<dbReference type="PROSITE" id="PS00389">
    <property type="entry name" value="ATPASE_DELTA"/>
    <property type="match status" value="1"/>
</dbReference>
<proteinExistence type="inferred from homology"/>
<protein>
    <recommendedName>
        <fullName evidence="1">ATP synthase subunit delta</fullName>
    </recommendedName>
    <alternativeName>
        <fullName evidence="1">ATP synthase F(1) sector subunit delta</fullName>
    </alternativeName>
    <alternativeName>
        <fullName evidence="1">F-type ATPase subunit delta</fullName>
        <shortName evidence="1">F-ATPase subunit delta</shortName>
    </alternativeName>
</protein>
<name>ATPD_STAAT</name>
<comment type="function">
    <text evidence="1">F(1)F(0) ATP synthase produces ATP from ADP in the presence of a proton or sodium gradient. F-type ATPases consist of two structural domains, F(1) containing the extramembraneous catalytic core and F(0) containing the membrane proton channel, linked together by a central stalk and a peripheral stalk. During catalysis, ATP synthesis in the catalytic domain of F(1) is coupled via a rotary mechanism of the central stalk subunits to proton translocation.</text>
</comment>
<comment type="function">
    <text evidence="1">This protein is part of the stalk that links CF(0) to CF(1). It either transmits conformational changes from CF(0) to CF(1) or is implicated in proton conduction.</text>
</comment>
<comment type="subunit">
    <text evidence="1">F-type ATPases have 2 components, F(1) - the catalytic core - and F(0) - the membrane proton channel. F(1) has five subunits: alpha(3), beta(3), gamma(1), delta(1), epsilon(1). F(0) has three main subunits: a(1), b(2) and c(10-14). The alpha and beta chains form an alternating ring which encloses part of the gamma chain. F(1) is attached to F(0) by a central stalk formed by the gamma and epsilon chains, while a peripheral stalk is formed by the delta and b chains.</text>
</comment>
<comment type="subcellular location">
    <subcellularLocation>
        <location evidence="1">Cell membrane</location>
        <topology evidence="1">Peripheral membrane protein</topology>
    </subcellularLocation>
</comment>
<comment type="similarity">
    <text evidence="1">Belongs to the ATPase delta chain family.</text>
</comment>
<keyword id="KW-0066">ATP synthesis</keyword>
<keyword id="KW-1003">Cell membrane</keyword>
<keyword id="KW-0139">CF(1)</keyword>
<keyword id="KW-0375">Hydrogen ion transport</keyword>
<keyword id="KW-0406">Ion transport</keyword>
<keyword id="KW-0472">Membrane</keyword>
<keyword id="KW-0813">Transport</keyword>
<reference key="1">
    <citation type="journal article" date="2007" name="BMC Microbiol.">
        <title>Subtle genetic changes enhance virulence of methicillin resistant and sensitive Staphylococcus aureus.</title>
        <authorList>
            <person name="Highlander S.K."/>
            <person name="Hulten K.G."/>
            <person name="Qin X."/>
            <person name="Jiang H."/>
            <person name="Yerrapragada S."/>
            <person name="Mason E.O. Jr."/>
            <person name="Shang Y."/>
            <person name="Williams T.M."/>
            <person name="Fortunov R.M."/>
            <person name="Liu Y."/>
            <person name="Igboeli O."/>
            <person name="Petrosino J."/>
            <person name="Tirumalai M."/>
            <person name="Uzman A."/>
            <person name="Fox G.E."/>
            <person name="Cardenas A.M."/>
            <person name="Muzny D.M."/>
            <person name="Hemphill L."/>
            <person name="Ding Y."/>
            <person name="Dugan S."/>
            <person name="Blyth P.R."/>
            <person name="Buhay C.J."/>
            <person name="Dinh H.H."/>
            <person name="Hawes A.C."/>
            <person name="Holder M."/>
            <person name="Kovar C.L."/>
            <person name="Lee S.L."/>
            <person name="Liu W."/>
            <person name="Nazareth L.V."/>
            <person name="Wang Q."/>
            <person name="Zhou J."/>
            <person name="Kaplan S.L."/>
            <person name="Weinstock G.M."/>
        </authorList>
    </citation>
    <scope>NUCLEOTIDE SEQUENCE [LARGE SCALE GENOMIC DNA]</scope>
    <source>
        <strain>USA300 / TCH1516</strain>
    </source>
</reference>
<sequence>MVKVANKYAKALFDVSLDTNNLETINEELTVINEAVKDKIEQLRMVDSNPTQTAEQRRELINGVFTDINPYIKNMMYVLADNRHISLIADVFKAFQSLYNGHYNQDFATIESTYELSQEELDKIVKLVTQQTKLSKVIVDTKINPDLIGGFRVKVGTTVLDGSVRNDLVQLQRKFRRVN</sequence>
<feature type="chain" id="PRO_1000184802" description="ATP synthase subunit delta">
    <location>
        <begin position="1"/>
        <end position="179"/>
    </location>
</feature>
<evidence type="ECO:0000255" key="1">
    <source>
        <dbReference type="HAMAP-Rule" id="MF_01416"/>
    </source>
</evidence>
<accession>A8YY73</accession>
<gene>
    <name evidence="1" type="primary">atpH</name>
    <name type="ordered locus">USA300HOU_2096</name>
</gene>